<keyword id="KW-0067">ATP-binding</keyword>
<keyword id="KW-0963">Cytoplasm</keyword>
<keyword id="KW-0227">DNA damage</keyword>
<keyword id="KW-0233">DNA recombination</keyword>
<keyword id="KW-0234">DNA repair</keyword>
<keyword id="KW-0238">DNA-binding</keyword>
<keyword id="KW-0378">Hydrolase</keyword>
<keyword id="KW-0547">Nucleotide-binding</keyword>
<reference key="1">
    <citation type="journal article" date="2009" name="BMC Genomics">
        <title>Pseudogene accumulation in the evolutionary histories of Salmonella enterica serovars Paratyphi A and Typhi.</title>
        <authorList>
            <person name="Holt K.E."/>
            <person name="Thomson N.R."/>
            <person name="Wain J."/>
            <person name="Langridge G.C."/>
            <person name="Hasan R."/>
            <person name="Bhutta Z.A."/>
            <person name="Quail M.A."/>
            <person name="Norbertczak H."/>
            <person name="Walker D."/>
            <person name="Simmonds M."/>
            <person name="White B."/>
            <person name="Bason N."/>
            <person name="Mungall K."/>
            <person name="Dougan G."/>
            <person name="Parkhill J."/>
        </authorList>
    </citation>
    <scope>NUCLEOTIDE SEQUENCE [LARGE SCALE GENOMIC DNA]</scope>
    <source>
        <strain>AKU_12601</strain>
    </source>
</reference>
<evidence type="ECO:0000255" key="1">
    <source>
        <dbReference type="HAMAP-Rule" id="MF_00016"/>
    </source>
</evidence>
<gene>
    <name evidence="1" type="primary">ruvB</name>
    <name type="ordered locus">SSPA0909</name>
</gene>
<accession>B5BH61</accession>
<organism>
    <name type="scientific">Salmonella paratyphi A (strain AKU_12601)</name>
    <dbReference type="NCBI Taxonomy" id="554290"/>
    <lineage>
        <taxon>Bacteria</taxon>
        <taxon>Pseudomonadati</taxon>
        <taxon>Pseudomonadota</taxon>
        <taxon>Gammaproteobacteria</taxon>
        <taxon>Enterobacterales</taxon>
        <taxon>Enterobacteriaceae</taxon>
        <taxon>Salmonella</taxon>
    </lineage>
</organism>
<sequence>MIEADRLISAGATIAEDVADRAIRPKLLAEYVGQPQVRSQMEIFIQAAKRRGDALDHLLIFGPPGLGKTTLANIVANEMGVNLRTTSGPVLEKAGDLAAMLTNLEPHDVLFIDEIHRLSPVVEEVLYPAMEDYQLDIMIGEGPAARSIKIDLPPFTLIGATTRAGSLTSPLRDRFGIVQRLEFYQVPDLQHIVGRSARHMGLEMSDDGALEVARRARGTPRIANRLLRRVRDFAEVKHDGAISAEIAAQALDMLNVDAEGFDYMDRKLLLAVIDKFFGGPVGLDNLAAAIGEERETIEDVLEPYLIQQGFLQRTPRGRMATVRAWNHFGITPPEMP</sequence>
<proteinExistence type="inferred from homology"/>
<comment type="function">
    <text evidence="1">The RuvA-RuvB-RuvC complex processes Holliday junction (HJ) DNA during genetic recombination and DNA repair, while the RuvA-RuvB complex plays an important role in the rescue of blocked DNA replication forks via replication fork reversal (RFR). RuvA specifically binds to HJ cruciform DNA, conferring on it an open structure. The RuvB hexamer acts as an ATP-dependent pump, pulling dsDNA into and through the RuvAB complex. RuvB forms 2 homohexamers on either side of HJ DNA bound by 1 or 2 RuvA tetramers; 4 subunits per hexamer contact DNA at a time. Coordinated motions by a converter formed by DNA-disengaged RuvB subunits stimulates ATP hydrolysis and nucleotide exchange. Immobilization of the converter enables RuvB to convert the ATP-contained energy into a lever motion, pulling 2 nucleotides of DNA out of the RuvA tetramer per ATP hydrolyzed, thus driving DNA branch migration. The RuvB motors rotate together with the DNA substrate, which together with the progressing nucleotide cycle form the mechanistic basis for DNA recombination by continuous HJ branch migration. Branch migration allows RuvC to scan DNA until it finds its consensus sequence, where it cleaves and resolves cruciform DNA.</text>
</comment>
<comment type="catalytic activity">
    <reaction evidence="1">
        <text>ATP + H2O = ADP + phosphate + H(+)</text>
        <dbReference type="Rhea" id="RHEA:13065"/>
        <dbReference type="ChEBI" id="CHEBI:15377"/>
        <dbReference type="ChEBI" id="CHEBI:15378"/>
        <dbReference type="ChEBI" id="CHEBI:30616"/>
        <dbReference type="ChEBI" id="CHEBI:43474"/>
        <dbReference type="ChEBI" id="CHEBI:456216"/>
    </reaction>
</comment>
<comment type="subunit">
    <text evidence="1">Homohexamer. Forms an RuvA(8)-RuvB(12)-Holliday junction (HJ) complex. HJ DNA is sandwiched between 2 RuvA tetramers; dsDNA enters through RuvA and exits via RuvB. An RuvB hexamer assembles on each DNA strand where it exits the tetramer. Each RuvB hexamer is contacted by two RuvA subunits (via domain III) on 2 adjacent RuvB subunits; this complex drives branch migration. In the full resolvosome a probable DNA-RuvA(4)-RuvB(12)-RuvC(2) complex forms which resolves the HJ.</text>
</comment>
<comment type="subcellular location">
    <subcellularLocation>
        <location evidence="1">Cytoplasm</location>
    </subcellularLocation>
</comment>
<comment type="domain">
    <text evidence="1">Has 3 domains, the large (RuvB-L) and small ATPase (RuvB-S) domains and the C-terminal head (RuvB-H) domain. The head domain binds DNA, while the ATPase domains jointly bind ATP, ADP or are empty depending on the state of the subunit in the translocation cycle. During a single DNA translocation step the structure of each domain remains the same, but their relative positions change.</text>
</comment>
<comment type="similarity">
    <text evidence="1">Belongs to the RuvB family.</text>
</comment>
<dbReference type="EC" id="3.6.4.-" evidence="1"/>
<dbReference type="EMBL" id="FM200053">
    <property type="protein sequence ID" value="CAR59053.1"/>
    <property type="molecule type" value="Genomic_DNA"/>
</dbReference>
<dbReference type="RefSeq" id="WP_000568508.1">
    <property type="nucleotide sequence ID" value="NC_011147.1"/>
</dbReference>
<dbReference type="SMR" id="B5BH61"/>
<dbReference type="KEGG" id="sek:SSPA0909"/>
<dbReference type="HOGENOM" id="CLU_055599_1_0_6"/>
<dbReference type="Proteomes" id="UP000001869">
    <property type="component" value="Chromosome"/>
</dbReference>
<dbReference type="GO" id="GO:0005737">
    <property type="term" value="C:cytoplasm"/>
    <property type="evidence" value="ECO:0007669"/>
    <property type="project" value="UniProtKB-SubCell"/>
</dbReference>
<dbReference type="GO" id="GO:0048476">
    <property type="term" value="C:Holliday junction resolvase complex"/>
    <property type="evidence" value="ECO:0007669"/>
    <property type="project" value="UniProtKB-UniRule"/>
</dbReference>
<dbReference type="GO" id="GO:0005524">
    <property type="term" value="F:ATP binding"/>
    <property type="evidence" value="ECO:0007669"/>
    <property type="project" value="UniProtKB-UniRule"/>
</dbReference>
<dbReference type="GO" id="GO:0016887">
    <property type="term" value="F:ATP hydrolysis activity"/>
    <property type="evidence" value="ECO:0007669"/>
    <property type="project" value="InterPro"/>
</dbReference>
<dbReference type="GO" id="GO:0000400">
    <property type="term" value="F:four-way junction DNA binding"/>
    <property type="evidence" value="ECO:0007669"/>
    <property type="project" value="UniProtKB-UniRule"/>
</dbReference>
<dbReference type="GO" id="GO:0009378">
    <property type="term" value="F:four-way junction helicase activity"/>
    <property type="evidence" value="ECO:0007669"/>
    <property type="project" value="InterPro"/>
</dbReference>
<dbReference type="GO" id="GO:0006310">
    <property type="term" value="P:DNA recombination"/>
    <property type="evidence" value="ECO:0007669"/>
    <property type="project" value="UniProtKB-UniRule"/>
</dbReference>
<dbReference type="GO" id="GO:0006281">
    <property type="term" value="P:DNA repair"/>
    <property type="evidence" value="ECO:0007669"/>
    <property type="project" value="UniProtKB-UniRule"/>
</dbReference>
<dbReference type="CDD" id="cd00009">
    <property type="entry name" value="AAA"/>
    <property type="match status" value="1"/>
</dbReference>
<dbReference type="FunFam" id="1.10.10.10:FF:000086">
    <property type="entry name" value="Holliday junction ATP-dependent DNA helicase RuvB"/>
    <property type="match status" value="1"/>
</dbReference>
<dbReference type="FunFam" id="1.10.8.60:FF:000023">
    <property type="entry name" value="Holliday junction ATP-dependent DNA helicase RuvB"/>
    <property type="match status" value="1"/>
</dbReference>
<dbReference type="FunFam" id="3.40.50.300:FF:000073">
    <property type="entry name" value="Holliday junction ATP-dependent DNA helicase RuvB"/>
    <property type="match status" value="1"/>
</dbReference>
<dbReference type="Gene3D" id="1.10.8.60">
    <property type="match status" value="1"/>
</dbReference>
<dbReference type="Gene3D" id="3.40.50.300">
    <property type="entry name" value="P-loop containing nucleotide triphosphate hydrolases"/>
    <property type="match status" value="1"/>
</dbReference>
<dbReference type="Gene3D" id="1.10.10.10">
    <property type="entry name" value="Winged helix-like DNA-binding domain superfamily/Winged helix DNA-binding domain"/>
    <property type="match status" value="1"/>
</dbReference>
<dbReference type="HAMAP" id="MF_00016">
    <property type="entry name" value="DNA_HJ_migration_RuvB"/>
    <property type="match status" value="1"/>
</dbReference>
<dbReference type="InterPro" id="IPR003593">
    <property type="entry name" value="AAA+_ATPase"/>
</dbReference>
<dbReference type="InterPro" id="IPR041445">
    <property type="entry name" value="AAA_lid_4"/>
</dbReference>
<dbReference type="InterPro" id="IPR004605">
    <property type="entry name" value="DNA_helicase_Holl-junc_RuvB"/>
</dbReference>
<dbReference type="InterPro" id="IPR027417">
    <property type="entry name" value="P-loop_NTPase"/>
</dbReference>
<dbReference type="InterPro" id="IPR008824">
    <property type="entry name" value="RuvB-like_N"/>
</dbReference>
<dbReference type="InterPro" id="IPR008823">
    <property type="entry name" value="RuvB_C"/>
</dbReference>
<dbReference type="InterPro" id="IPR036388">
    <property type="entry name" value="WH-like_DNA-bd_sf"/>
</dbReference>
<dbReference type="InterPro" id="IPR036390">
    <property type="entry name" value="WH_DNA-bd_sf"/>
</dbReference>
<dbReference type="NCBIfam" id="NF000868">
    <property type="entry name" value="PRK00080.1"/>
    <property type="match status" value="1"/>
</dbReference>
<dbReference type="NCBIfam" id="TIGR00635">
    <property type="entry name" value="ruvB"/>
    <property type="match status" value="1"/>
</dbReference>
<dbReference type="PANTHER" id="PTHR42848">
    <property type="match status" value="1"/>
</dbReference>
<dbReference type="PANTHER" id="PTHR42848:SF1">
    <property type="entry name" value="HOLLIDAY JUNCTION BRANCH MIGRATION COMPLEX SUBUNIT RUVB"/>
    <property type="match status" value="1"/>
</dbReference>
<dbReference type="Pfam" id="PF17864">
    <property type="entry name" value="AAA_lid_4"/>
    <property type="match status" value="1"/>
</dbReference>
<dbReference type="Pfam" id="PF05491">
    <property type="entry name" value="RuvB_C"/>
    <property type="match status" value="1"/>
</dbReference>
<dbReference type="Pfam" id="PF05496">
    <property type="entry name" value="RuvB_N"/>
    <property type="match status" value="1"/>
</dbReference>
<dbReference type="SMART" id="SM00382">
    <property type="entry name" value="AAA"/>
    <property type="match status" value="1"/>
</dbReference>
<dbReference type="SUPFAM" id="SSF52540">
    <property type="entry name" value="P-loop containing nucleoside triphosphate hydrolases"/>
    <property type="match status" value="1"/>
</dbReference>
<dbReference type="SUPFAM" id="SSF46785">
    <property type="entry name" value="Winged helix' DNA-binding domain"/>
    <property type="match status" value="1"/>
</dbReference>
<protein>
    <recommendedName>
        <fullName evidence="1">Holliday junction branch migration complex subunit RuvB</fullName>
        <ecNumber evidence="1">3.6.4.-</ecNumber>
    </recommendedName>
</protein>
<name>RUVB_SALPK</name>
<feature type="chain" id="PRO_1000089675" description="Holliday junction branch migration complex subunit RuvB">
    <location>
        <begin position="1"/>
        <end position="336"/>
    </location>
</feature>
<feature type="region of interest" description="Large ATPase domain (RuvB-L)" evidence="1">
    <location>
        <begin position="4"/>
        <end position="184"/>
    </location>
</feature>
<feature type="region of interest" description="Small ATPAse domain (RuvB-S)" evidence="1">
    <location>
        <begin position="185"/>
        <end position="255"/>
    </location>
</feature>
<feature type="region of interest" description="Head domain (RuvB-H)" evidence="1">
    <location>
        <begin position="258"/>
        <end position="336"/>
    </location>
</feature>
<feature type="binding site" evidence="1">
    <location>
        <position position="23"/>
    </location>
    <ligand>
        <name>ATP</name>
        <dbReference type="ChEBI" id="CHEBI:30616"/>
    </ligand>
</feature>
<feature type="binding site" evidence="1">
    <location>
        <position position="24"/>
    </location>
    <ligand>
        <name>ATP</name>
        <dbReference type="ChEBI" id="CHEBI:30616"/>
    </ligand>
</feature>
<feature type="binding site" evidence="1">
    <location>
        <position position="65"/>
    </location>
    <ligand>
        <name>ATP</name>
        <dbReference type="ChEBI" id="CHEBI:30616"/>
    </ligand>
</feature>
<feature type="binding site" evidence="1">
    <location>
        <position position="68"/>
    </location>
    <ligand>
        <name>ATP</name>
        <dbReference type="ChEBI" id="CHEBI:30616"/>
    </ligand>
</feature>
<feature type="binding site" evidence="1">
    <location>
        <position position="69"/>
    </location>
    <ligand>
        <name>ATP</name>
        <dbReference type="ChEBI" id="CHEBI:30616"/>
    </ligand>
</feature>
<feature type="binding site" evidence="1">
    <location>
        <position position="69"/>
    </location>
    <ligand>
        <name>Mg(2+)</name>
        <dbReference type="ChEBI" id="CHEBI:18420"/>
    </ligand>
</feature>
<feature type="binding site" evidence="1">
    <location>
        <position position="70"/>
    </location>
    <ligand>
        <name>ATP</name>
        <dbReference type="ChEBI" id="CHEBI:30616"/>
    </ligand>
</feature>
<feature type="binding site" evidence="1">
    <location>
        <begin position="131"/>
        <end position="133"/>
    </location>
    <ligand>
        <name>ATP</name>
        <dbReference type="ChEBI" id="CHEBI:30616"/>
    </ligand>
</feature>
<feature type="binding site" evidence="1">
    <location>
        <position position="174"/>
    </location>
    <ligand>
        <name>ATP</name>
        <dbReference type="ChEBI" id="CHEBI:30616"/>
    </ligand>
</feature>
<feature type="binding site" evidence="1">
    <location>
        <position position="184"/>
    </location>
    <ligand>
        <name>ATP</name>
        <dbReference type="ChEBI" id="CHEBI:30616"/>
    </ligand>
</feature>
<feature type="binding site" evidence="1">
    <location>
        <position position="221"/>
    </location>
    <ligand>
        <name>ATP</name>
        <dbReference type="ChEBI" id="CHEBI:30616"/>
    </ligand>
</feature>
<feature type="binding site" evidence="1">
    <location>
        <position position="294"/>
    </location>
    <ligand>
        <name>DNA</name>
        <dbReference type="ChEBI" id="CHEBI:16991"/>
    </ligand>
</feature>
<feature type="binding site" evidence="1">
    <location>
        <position position="313"/>
    </location>
    <ligand>
        <name>DNA</name>
        <dbReference type="ChEBI" id="CHEBI:16991"/>
    </ligand>
</feature>
<feature type="binding site" evidence="1">
    <location>
        <position position="318"/>
    </location>
    <ligand>
        <name>DNA</name>
        <dbReference type="ChEBI" id="CHEBI:16991"/>
    </ligand>
</feature>